<organism>
    <name type="scientific">Drosophila willistoni</name>
    <name type="common">Fruit fly</name>
    <dbReference type="NCBI Taxonomy" id="7260"/>
    <lineage>
        <taxon>Eukaryota</taxon>
        <taxon>Metazoa</taxon>
        <taxon>Ecdysozoa</taxon>
        <taxon>Arthropoda</taxon>
        <taxon>Hexapoda</taxon>
        <taxon>Insecta</taxon>
        <taxon>Pterygota</taxon>
        <taxon>Neoptera</taxon>
        <taxon>Endopterygota</taxon>
        <taxon>Diptera</taxon>
        <taxon>Brachycera</taxon>
        <taxon>Muscomorpha</taxon>
        <taxon>Ephydroidea</taxon>
        <taxon>Drosophilidae</taxon>
        <taxon>Drosophila</taxon>
        <taxon>Sophophora</taxon>
    </lineage>
</organism>
<reference key="1">
    <citation type="journal article" date="2007" name="Nature">
        <title>Evolution of genes and genomes on the Drosophila phylogeny.</title>
        <authorList>
            <consortium name="Drosophila 12 genomes consortium"/>
        </authorList>
    </citation>
    <scope>NUCLEOTIDE SEQUENCE [LARGE SCALE GENOMIC DNA]</scope>
    <source>
        <strain>Tucson 14030-0811.24</strain>
    </source>
</reference>
<name>NO66_DROWI</name>
<accession>B4NP88</accession>
<dbReference type="EC" id="1.14.11.-"/>
<dbReference type="EC" id="1.14.11.27"/>
<dbReference type="EMBL" id="CH964291">
    <property type="protein sequence ID" value="EDW86328.1"/>
    <property type="molecule type" value="Genomic_DNA"/>
</dbReference>
<dbReference type="RefSeq" id="XP_002075342.2">
    <property type="nucleotide sequence ID" value="XM_002075306.2"/>
</dbReference>
<dbReference type="SMR" id="B4NP88"/>
<dbReference type="STRING" id="7260.B4NP88"/>
<dbReference type="EnsemblMetazoa" id="FBtr0246321">
    <property type="protein sequence ID" value="FBpp0244813"/>
    <property type="gene ID" value="FBgn0217675"/>
</dbReference>
<dbReference type="EnsemblMetazoa" id="FBtr0420072">
    <property type="protein sequence ID" value="FBpp0378195"/>
    <property type="gene ID" value="FBgn0278910"/>
</dbReference>
<dbReference type="EnsemblMetazoa" id="XM_002075306.4">
    <property type="protein sequence ID" value="XP_002075342.3"/>
    <property type="gene ID" value="LOC6652943"/>
</dbReference>
<dbReference type="GeneID" id="6652943"/>
<dbReference type="KEGG" id="dwi:6652943"/>
<dbReference type="CTD" id="31374"/>
<dbReference type="eggNOG" id="KOG3706">
    <property type="taxonomic scope" value="Eukaryota"/>
</dbReference>
<dbReference type="HOGENOM" id="CLU_013645_2_0_1"/>
<dbReference type="OMA" id="CIEVEHE"/>
<dbReference type="OrthoDB" id="425950at2759"/>
<dbReference type="PhylomeDB" id="B4NP88"/>
<dbReference type="Proteomes" id="UP000007798">
    <property type="component" value="Unassembled WGS sequence"/>
</dbReference>
<dbReference type="GO" id="GO:0005730">
    <property type="term" value="C:nucleolus"/>
    <property type="evidence" value="ECO:0007669"/>
    <property type="project" value="EnsemblMetazoa"/>
</dbReference>
<dbReference type="GO" id="GO:0005634">
    <property type="term" value="C:nucleus"/>
    <property type="evidence" value="ECO:0000250"/>
    <property type="project" value="UniProtKB"/>
</dbReference>
<dbReference type="GO" id="GO:0016706">
    <property type="term" value="F:2-oxoglutarate-dependent dioxygenase activity"/>
    <property type="evidence" value="ECO:0000250"/>
    <property type="project" value="UniProtKB"/>
</dbReference>
<dbReference type="GO" id="GO:0051864">
    <property type="term" value="F:histone H3K36 demethylase activity"/>
    <property type="evidence" value="ECO:0000250"/>
    <property type="project" value="UniProtKB"/>
</dbReference>
<dbReference type="GO" id="GO:0140680">
    <property type="term" value="F:histone H3K36me/H3K36me2 demethylase activity"/>
    <property type="evidence" value="ECO:0007669"/>
    <property type="project" value="UniProtKB-EC"/>
</dbReference>
<dbReference type="GO" id="GO:0034647">
    <property type="term" value="F:histone H3K4me/H3K4me2/H3K4me3 demethylase activity"/>
    <property type="evidence" value="ECO:0000250"/>
    <property type="project" value="UniProtKB"/>
</dbReference>
<dbReference type="GO" id="GO:0005506">
    <property type="term" value="F:iron ion binding"/>
    <property type="evidence" value="ECO:0000250"/>
    <property type="project" value="UniProtKB"/>
</dbReference>
<dbReference type="GO" id="GO:0048149">
    <property type="term" value="P:behavioral response to ethanol"/>
    <property type="evidence" value="ECO:0007669"/>
    <property type="project" value="EnsemblMetazoa"/>
</dbReference>
<dbReference type="GO" id="GO:0048512">
    <property type="term" value="P:circadian behavior"/>
    <property type="evidence" value="ECO:0007669"/>
    <property type="project" value="EnsemblMetazoa"/>
</dbReference>
<dbReference type="GO" id="GO:0045892">
    <property type="term" value="P:negative regulation of DNA-templated transcription"/>
    <property type="evidence" value="ECO:0000250"/>
    <property type="project" value="UniProtKB"/>
</dbReference>
<dbReference type="FunFam" id="2.60.120.650:FF:000013">
    <property type="entry name" value="Ribosomal oxygenase 1"/>
    <property type="match status" value="1"/>
</dbReference>
<dbReference type="FunFam" id="1.10.10.1500:FF:000001">
    <property type="entry name" value="ribosomal oxygenase 1 isoform X1"/>
    <property type="match status" value="1"/>
</dbReference>
<dbReference type="FunFam" id="3.90.930.40:FF:000001">
    <property type="entry name" value="ribosomal oxygenase 1 isoform X1"/>
    <property type="match status" value="1"/>
</dbReference>
<dbReference type="Gene3D" id="3.90.930.40">
    <property type="match status" value="1"/>
</dbReference>
<dbReference type="Gene3D" id="2.60.120.650">
    <property type="entry name" value="Cupin"/>
    <property type="match status" value="1"/>
</dbReference>
<dbReference type="Gene3D" id="1.10.10.1500">
    <property type="entry name" value="JmjC domain-containing ribosomal oxygenase (ROX), dimer domain"/>
    <property type="match status" value="1"/>
</dbReference>
<dbReference type="InterPro" id="IPR003347">
    <property type="entry name" value="JmjC_dom"/>
</dbReference>
<dbReference type="InterPro" id="IPR039994">
    <property type="entry name" value="NO66-like"/>
</dbReference>
<dbReference type="InterPro" id="IPR049043">
    <property type="entry name" value="RIOX1/NO66-like_C_WH"/>
</dbReference>
<dbReference type="PANTHER" id="PTHR13096">
    <property type="entry name" value="MINA53 MYC INDUCED NUCLEAR ANTIGEN"/>
    <property type="match status" value="1"/>
</dbReference>
<dbReference type="PANTHER" id="PTHR13096:SF8">
    <property type="entry name" value="RIBOSOMAL OXYGENASE 1"/>
    <property type="match status" value="1"/>
</dbReference>
<dbReference type="Pfam" id="PF08007">
    <property type="entry name" value="JmjC_2"/>
    <property type="match status" value="1"/>
</dbReference>
<dbReference type="Pfam" id="PF21233">
    <property type="entry name" value="RIOX1_C_WH"/>
    <property type="match status" value="1"/>
</dbReference>
<dbReference type="SUPFAM" id="SSF51197">
    <property type="entry name" value="Clavaminate synthase-like"/>
    <property type="match status" value="1"/>
</dbReference>
<dbReference type="PROSITE" id="PS51184">
    <property type="entry name" value="JMJC"/>
    <property type="match status" value="1"/>
</dbReference>
<feature type="chain" id="PRO_0000390993" description="Bifunctional lysine-specific demethylase and histidyl-hydroxylase NO66">
    <location>
        <begin position="1"/>
        <end position="767"/>
    </location>
</feature>
<feature type="domain" description="JmjC" evidence="2">
    <location>
        <begin position="420"/>
        <end position="565"/>
    </location>
</feature>
<feature type="region of interest" description="Disordered" evidence="3">
    <location>
        <begin position="21"/>
        <end position="324"/>
    </location>
</feature>
<feature type="compositionally biased region" description="Acidic residues" evidence="3">
    <location>
        <begin position="46"/>
        <end position="71"/>
    </location>
</feature>
<feature type="compositionally biased region" description="Low complexity" evidence="3">
    <location>
        <begin position="72"/>
        <end position="81"/>
    </location>
</feature>
<feature type="compositionally biased region" description="Acidic residues" evidence="3">
    <location>
        <begin position="82"/>
        <end position="98"/>
    </location>
</feature>
<feature type="compositionally biased region" description="Polar residues" evidence="3">
    <location>
        <begin position="127"/>
        <end position="137"/>
    </location>
</feature>
<feature type="compositionally biased region" description="Polar residues" evidence="3">
    <location>
        <begin position="177"/>
        <end position="199"/>
    </location>
</feature>
<feature type="compositionally biased region" description="Polar residues" evidence="3">
    <location>
        <begin position="262"/>
        <end position="279"/>
    </location>
</feature>
<feature type="compositionally biased region" description="Basic and acidic residues" evidence="3">
    <location>
        <begin position="315"/>
        <end position="324"/>
    </location>
</feature>
<feature type="binding site" evidence="2">
    <location>
        <position position="466"/>
    </location>
    <ligand>
        <name>Fe cation</name>
        <dbReference type="ChEBI" id="CHEBI:24875"/>
        <note>catalytic</note>
    </ligand>
</feature>
<feature type="binding site" evidence="2">
    <location>
        <position position="468"/>
    </location>
    <ligand>
        <name>Fe cation</name>
        <dbReference type="ChEBI" id="CHEBI:24875"/>
        <note>catalytic</note>
    </ligand>
</feature>
<feature type="binding site" evidence="2">
    <location>
        <position position="531"/>
    </location>
    <ligand>
        <name>Fe cation</name>
        <dbReference type="ChEBI" id="CHEBI:24875"/>
        <note>catalytic</note>
    </ligand>
</feature>
<feature type="modified residue" description="Phosphoserine" evidence="1">
    <location>
        <position position="44"/>
    </location>
</feature>
<feature type="modified residue" description="Phosphoserine" evidence="1">
    <location>
        <position position="214"/>
    </location>
</feature>
<protein>
    <recommendedName>
        <fullName>Bifunctional lysine-specific demethylase and histidyl-hydroxylase NO66</fullName>
        <ecNumber>1.14.11.-</ecNumber>
        <ecNumber>1.14.11.27</ecNumber>
    </recommendedName>
    <alternativeName>
        <fullName>Histone lysine demethylase NO66</fullName>
    </alternativeName>
</protein>
<gene>
    <name type="ORF">GK15670</name>
</gene>
<keyword id="KW-0156">Chromatin regulator</keyword>
<keyword id="KW-0223">Dioxygenase</keyword>
<keyword id="KW-0408">Iron</keyword>
<keyword id="KW-0479">Metal-binding</keyword>
<keyword id="KW-0539">Nucleus</keyword>
<keyword id="KW-0560">Oxidoreductase</keyword>
<keyword id="KW-0597">Phosphoprotein</keyword>
<keyword id="KW-1185">Reference proteome</keyword>
<keyword id="KW-0678">Repressor</keyword>
<keyword id="KW-0804">Transcription</keyword>
<keyword id="KW-0805">Transcription regulation</keyword>
<evidence type="ECO:0000250" key="1"/>
<evidence type="ECO:0000255" key="2">
    <source>
        <dbReference type="PROSITE-ProRule" id="PRU00538"/>
    </source>
</evidence>
<evidence type="ECO:0000256" key="3">
    <source>
        <dbReference type="SAM" id="MobiDB-lite"/>
    </source>
</evidence>
<evidence type="ECO:0000305" key="4"/>
<proteinExistence type="inferred from homology"/>
<comment type="function">
    <text evidence="1">Oxygenase that can act as both a histone lysine demethylase and a ribosomal histidine hydroxylase. Specifically demethylates 'Lys-4' (H3K4me) and 'Lys-36' (H3K36me) of histone H3, thereby playing a central role in histone code (By similarity).</text>
</comment>
<comment type="catalytic activity">
    <reaction>
        <text>N(6),N(6)-dimethyl-L-lysyl(36)-[histone H3] + 2 2-oxoglutarate + 2 O2 = L-lysyl(36)-[histone H3] + 2 formaldehyde + 2 succinate + 2 CO2</text>
        <dbReference type="Rhea" id="RHEA:42032"/>
        <dbReference type="Rhea" id="RHEA-COMP:9785"/>
        <dbReference type="Rhea" id="RHEA-COMP:9787"/>
        <dbReference type="ChEBI" id="CHEBI:15379"/>
        <dbReference type="ChEBI" id="CHEBI:16526"/>
        <dbReference type="ChEBI" id="CHEBI:16810"/>
        <dbReference type="ChEBI" id="CHEBI:16842"/>
        <dbReference type="ChEBI" id="CHEBI:29969"/>
        <dbReference type="ChEBI" id="CHEBI:30031"/>
        <dbReference type="ChEBI" id="CHEBI:61976"/>
        <dbReference type="EC" id="1.14.11.27"/>
    </reaction>
</comment>
<comment type="cofactor">
    <cofactor evidence="1">
        <name>Fe(2+)</name>
        <dbReference type="ChEBI" id="CHEBI:29033"/>
    </cofactor>
    <text evidence="1">Binds 1 Fe(2+) ion per subunit.</text>
</comment>
<comment type="subcellular location">
    <subcellularLocation>
        <location evidence="1">Nucleus</location>
    </subcellularLocation>
</comment>
<comment type="similarity">
    <text evidence="4">Belongs to the ROX family. NO66 subfamily.</text>
</comment>
<sequence length="767" mass="85697">MDPETLDDLVNELFDKKKQLTVSQKQQREKLQAYMMAQLEGSSSASDDDDEDDGEGEDDNDSNSDEDESGSESDATSADDSFSSDDNDDDDSGDEDGSDSGGSDSDLSFEDDSDYEDSHSTEDLTEYTINSENSSVEPTPPKRLKAGDKRPCSTQEEEESEDDNNNKPTARKLQMGESATNGRIQQRKSMVEPATTSKPASCPLTRKSLPANGSAAKSCPLPPKNQKQSAAAKSCPLPPKEKKLSSGAVAKSCPLPPKNEKPSSSGASCPLPSKTSKQVQPRVCQLSDKPKSSSSQSTQKRSKNEAAEGATDTNGRQEAHRQNSIEEGRRILSWVLNPIKPDDFFKDFWEKNACQVQRNAPTYFSELISFEMIDQMMLKHHLEFTTNIDVTSYKDGRRETLNPEGRAMPPTVWGFYGEGCSIRILNPSTYLPGLRTMCSLMQEFFHCLVGANVYLTPPNSQGFAPHFDDIEAFVLQVEGRKRWRLYMPLQPSDVLARESSGNYTPDQLGEPIFDEVLKPGDVLYFPRGTVHQAITEKKHHSLHITLSVYQQQAYANLLEKLMPMVLQSAIKHSVSLRRGLPLHTWQHLGIAHGATKCSSRSQLIKGIQEMVQQHLTPSENQIDAAVDQLAKRYQHEALPPTILPEEKLRTVFGSRSATDAHGKCLCDYELTEDTSIRLLRANILRLVVDETHLRVYYYVDNALEYCKYEANFMEIEPTEAAAVETLMHAYPAYVKISMLPLRKPERRIEVATALWERGLLMTETPFK</sequence>